<organism>
    <name type="scientific">Oncidium hybrid cultivar</name>
    <name type="common">Orchid</name>
    <dbReference type="NCBI Taxonomy" id="141207"/>
    <lineage>
        <taxon>Eukaryota</taxon>
        <taxon>Viridiplantae</taxon>
        <taxon>Streptophyta</taxon>
        <taxon>Embryophyta</taxon>
        <taxon>Tracheophyta</taxon>
        <taxon>Spermatophyta</taxon>
        <taxon>Magnoliopsida</taxon>
        <taxon>Liliopsida</taxon>
        <taxon>Asparagales</taxon>
        <taxon>Orchidaceae</taxon>
        <taxon>Epidendroideae</taxon>
        <taxon>Cymbidieae</taxon>
        <taxon>Oncidiinae</taxon>
        <taxon>Oncidium</taxon>
    </lineage>
</organism>
<feature type="transit peptide" description="Chloroplast" evidence="2">
    <location>
        <begin position="1"/>
        <end position="50"/>
    </location>
</feature>
<feature type="chain" id="PRO_0000225673" description="Prolycopene isomerase 1, chloroplastic">
    <location>
        <begin position="51"/>
        <end position="587"/>
    </location>
</feature>
<feature type="region of interest" description="Disordered" evidence="3">
    <location>
        <begin position="1"/>
        <end position="21"/>
    </location>
</feature>
<feature type="compositionally biased region" description="Low complexity" evidence="3">
    <location>
        <begin position="1"/>
        <end position="13"/>
    </location>
</feature>
<reference key="1">
    <citation type="journal article" date="2006" name="Planta">
        <title>Color genes in the orchid Oncidium Gower Ramsey: identification, expression, and potential genetic instability in an interspecific cross.</title>
        <authorList>
            <person name="Hieber A.D."/>
            <person name="Mudalige-Jayawickrama R.G."/>
            <person name="Kuehnle A.R."/>
        </authorList>
    </citation>
    <scope>NUCLEOTIDE SEQUENCE [MRNA]</scope>
    <scope>TISSUE SPECIFICITY</scope>
    <source>
        <strain>cv. Gower Ramsey</strain>
    </source>
</reference>
<name>CRTS1_ONCHC</name>
<keyword id="KW-0125">Carotenoid biosynthesis</keyword>
<keyword id="KW-0150">Chloroplast</keyword>
<keyword id="KW-0274">FAD</keyword>
<keyword id="KW-0285">Flavoprotein</keyword>
<keyword id="KW-0413">Isomerase</keyword>
<keyword id="KW-0472">Membrane</keyword>
<keyword id="KW-0520">NAD</keyword>
<keyword id="KW-0521">NADP</keyword>
<keyword id="KW-0934">Plastid</keyword>
<keyword id="KW-0809">Transit peptide</keyword>
<sequence length="587" mass="64877">MLCLSLNSSSTSPPKSPLHHSFSRRSMRSWVCSPRVQRKKLGFWSSPKAVLSAVSGAGSEAGKVEEAEEYDAIVIGSGIGGLVAATQLAVKGARVLVLEKYVIPGGSSGFFQRDGFTFDVGSSVMFGFSDKGNLNLITQALEAVDCKLRTIPDPTTVHFHLPDNLSIRVHREYDMFISELVNYFPHEKEGIRRFYNECWKIFNSLNSLELKSLEEPMYLFGQFFRKPVECLTLAYYLPQNAGDIARKFIKDPQLLSFIDAECFIVSTVKALHTPMINASMVLCDRHFGGINYPVGGVGGIAKALANGLVNKGSKLLYKANVTKILLKDGKAVGVKLSNGREFFAKTVISNATRWDTFGKLLKVEDIPQEEKNFKKIYLKAPSFLSIHMGVKAFVLPPDTDCHHFILEDNWGRLELPYGSIFLSIPTVLDPSLAPEGHHIFHIFTTSSIENWEGLSHKEYEEKKELVADEIITRLEKKLFPGLKDSVVLKEVGTPKTHRRFLARDSGTYGPMPRKVPKGLLGMPFNTTAINGLYCVGDSCFPGQGVIAVAFSGVMCAHRVAADLGIEKKAPVLDAALLRLLGWLRTVA</sequence>
<evidence type="ECO:0000250" key="1"/>
<evidence type="ECO:0000255" key="2"/>
<evidence type="ECO:0000256" key="3">
    <source>
        <dbReference type="SAM" id="MobiDB-lite"/>
    </source>
</evidence>
<evidence type="ECO:0000269" key="4">
    <source>
    </source>
</evidence>
<evidence type="ECO:0000305" key="5"/>
<gene>
    <name type="primary">CRTISO1</name>
</gene>
<proteinExistence type="evidence at transcript level"/>
<comment type="function">
    <text evidence="1">Carotene cis-trans-isomerase that converts 7,9,9'-tri-cis-neurosporene to 9'-cis-neurosporene and 7,9,9',7'-tetra-cis-lycopene (also known as prolycopene) into all-trans-lycopene. Isomerization requires redox-active components, suggesting that isomerization is achieved by a reversible redox reaction acting at specific double bonds. Isomerizes adjacent cis-double bonds at C7 and C9 pairwise into the trans-configuration, but is incapable of isomerizing single cis-double bonds at C9 and C9' (By similarity).</text>
</comment>
<comment type="catalytic activity">
    <reaction>
        <text>7,7',9,9'-tetra-cis-lycopene = all-trans-lycopene</text>
        <dbReference type="Rhea" id="RHEA:30971"/>
        <dbReference type="ChEBI" id="CHEBI:15948"/>
        <dbReference type="ChEBI" id="CHEBI:62466"/>
        <dbReference type="EC" id="5.2.1.13"/>
    </reaction>
</comment>
<comment type="cofactor">
    <cofactor evidence="1">
        <name>NAD(+)</name>
        <dbReference type="ChEBI" id="CHEBI:57540"/>
    </cofactor>
    <cofactor evidence="1">
        <name>NADP(+)</name>
        <dbReference type="ChEBI" id="CHEBI:58349"/>
    </cofactor>
    <cofactor evidence="1">
        <name>FAD</name>
        <dbReference type="ChEBI" id="CHEBI:57692"/>
    </cofactor>
</comment>
<comment type="pathway">
    <text>Carotenoid biosynthesis; lycopene biosynthesis.</text>
</comment>
<comment type="subcellular location">
    <subcellularLocation>
        <location evidence="1">Plastid</location>
        <location evidence="1">Chloroplast membrane</location>
        <topology evidence="1">Peripheral membrane protein</topology>
    </subcellularLocation>
</comment>
<comment type="tissue specificity">
    <text evidence="4">Up-regulated in the flower buds and flower lip tissue, while it is weakly expressed in leaves.</text>
</comment>
<comment type="similarity">
    <text evidence="5">Belongs to the carotenoid/retinoid oxidoreductase family. CrtISO subfamily.</text>
</comment>
<dbReference type="EC" id="5.2.1.13"/>
<dbReference type="EMBL" id="AY973633">
    <property type="protein sequence ID" value="AAX84688.1"/>
    <property type="molecule type" value="mRNA"/>
</dbReference>
<dbReference type="SMR" id="Q52QW3"/>
<dbReference type="UniPathway" id="UPA00803"/>
<dbReference type="GO" id="GO:0031969">
    <property type="term" value="C:chloroplast membrane"/>
    <property type="evidence" value="ECO:0007669"/>
    <property type="project" value="UniProtKB-SubCell"/>
</dbReference>
<dbReference type="GO" id="GO:0046608">
    <property type="term" value="F:carotenoid isomerase activity"/>
    <property type="evidence" value="ECO:0007669"/>
    <property type="project" value="InterPro"/>
</dbReference>
<dbReference type="GO" id="GO:0016491">
    <property type="term" value="F:oxidoreductase activity"/>
    <property type="evidence" value="ECO:0007669"/>
    <property type="project" value="InterPro"/>
</dbReference>
<dbReference type="GO" id="GO:0016117">
    <property type="term" value="P:carotenoid biosynthetic process"/>
    <property type="evidence" value="ECO:0007669"/>
    <property type="project" value="UniProtKB-KW"/>
</dbReference>
<dbReference type="Gene3D" id="3.90.660.50">
    <property type="match status" value="1"/>
</dbReference>
<dbReference type="Gene3D" id="3.50.50.60">
    <property type="entry name" value="FAD/NAD(P)-binding domain"/>
    <property type="match status" value="1"/>
</dbReference>
<dbReference type="InterPro" id="IPR002937">
    <property type="entry name" value="Amino_oxidase"/>
</dbReference>
<dbReference type="InterPro" id="IPR014101">
    <property type="entry name" value="CrtISO"/>
</dbReference>
<dbReference type="InterPro" id="IPR045892">
    <property type="entry name" value="CrtISO-like"/>
</dbReference>
<dbReference type="InterPro" id="IPR036188">
    <property type="entry name" value="FAD/NAD-bd_sf"/>
</dbReference>
<dbReference type="NCBIfam" id="TIGR02730">
    <property type="entry name" value="carot_isom"/>
    <property type="match status" value="1"/>
</dbReference>
<dbReference type="PANTHER" id="PTHR46313">
    <property type="match status" value="1"/>
</dbReference>
<dbReference type="PANTHER" id="PTHR46313:SF3">
    <property type="entry name" value="PROLYCOPENE ISOMERASE, CHLOROPLASTIC"/>
    <property type="match status" value="1"/>
</dbReference>
<dbReference type="Pfam" id="PF01593">
    <property type="entry name" value="Amino_oxidase"/>
    <property type="match status" value="1"/>
</dbReference>
<dbReference type="SUPFAM" id="SSF51905">
    <property type="entry name" value="FAD/NAD(P)-binding domain"/>
    <property type="match status" value="1"/>
</dbReference>
<protein>
    <recommendedName>
        <fullName>Prolycopene isomerase 1, chloroplastic</fullName>
        <shortName>CrtISO1</shortName>
        <ecNumber>5.2.1.13</ecNumber>
    </recommendedName>
    <alternativeName>
        <fullName>Carotenoid isomerase 1</fullName>
    </alternativeName>
    <alternativeName>
        <fullName>OcrtISO22</fullName>
    </alternativeName>
</protein>
<accession>Q52QW3</accession>